<gene>
    <name evidence="1" type="primary">NP</name>
</gene>
<accession>P69293</accession>
<accession>Q07539</accession>
<accession>Q08029</accession>
<protein>
    <recommendedName>
        <fullName evidence="1">Nucleoprotein</fullName>
    </recommendedName>
    <alternativeName>
        <fullName evidence="1">Nucleocapsid protein</fullName>
        <shortName evidence="1">Protein N</shortName>
    </alternativeName>
</protein>
<name>NCAP_I87A2</name>
<feature type="chain" id="PRO_0000079050" description="Nucleoprotein">
    <location>
        <begin position="1"/>
        <end position="498"/>
    </location>
</feature>
<feature type="region of interest" description="Disordered" evidence="2">
    <location>
        <begin position="1"/>
        <end position="21"/>
    </location>
</feature>
<feature type="short sequence motif" description="Unconventional nuclear localization signal" evidence="1">
    <location>
        <begin position="1"/>
        <end position="18"/>
    </location>
</feature>
<feature type="short sequence motif" description="Bipartite nuclear localization signal" evidence="1">
    <location>
        <begin position="198"/>
        <end position="216"/>
    </location>
</feature>
<feature type="compositionally biased region" description="Basic and acidic residues" evidence="2">
    <location>
        <begin position="8"/>
        <end position="21"/>
    </location>
</feature>
<comment type="function">
    <text evidence="1">Encapsidates the negative strand viral RNA, protecting it from nucleases. The encapsidated genomic RNA is termed the ribonucleoprotein (RNP) and serves as template for transcription and replication. The RNP needs to be localized in the host nucleus to start an infectious cycle, but is too large to diffuse through the nuclear pore complex. NP comprises at least 2 nuclear localization signals that are responsible for the active RNP import into the nucleus through cellular importin alpha/beta pathway. Later in the infection, nclear export of RNPs are mediated through viral proteins NEP interacting with M1 which binds nucleoproteins. It is possible that nucleoprotein binds directly host exportin-1/XPO1 and plays an active role in RNPs nuclear export. M1 interaction with RNP seems to hide nucleoprotein's nuclear localization signals. Soon after a virion infects a new cell, M1 dissociates from the RNP under acidification of the virion driven by M2 protein. Dissociation of M1 from RNP unmasks nucleoprotein's nuclear localization signals, targeting the RNP to the nucleus.</text>
</comment>
<comment type="subunit">
    <text evidence="1">Homomultimerizes to form the nucleocapsid. May bind host exportin-1/XPO1. Binds to viral genomic RNA. Protein-RNA contacts are mediated by a combination of electrostatic interactions between positively charged residues and the phosphate backbone and planar interactions between aromatic side chains and bases.</text>
</comment>
<comment type="subcellular location">
    <subcellularLocation>
        <location evidence="1">Virion</location>
    </subcellularLocation>
    <subcellularLocation>
        <location evidence="1">Host nucleus</location>
    </subcellularLocation>
</comment>
<comment type="PTM">
    <text evidence="1">Late in virus-infected cells, may be cleaved from a 56-kDa protein to a 53-kDa protein by a cellular caspase. This cleavage might be a marker for the onset of apoptosis in infected cells or have a specific function in virus host interaction.</text>
</comment>
<comment type="similarity">
    <text evidence="1">Belongs to the influenza viruses nucleoprotein family.</text>
</comment>
<dbReference type="EMBL" id="L07366">
    <property type="protein sequence ID" value="AAA51489.1"/>
    <property type="molecule type" value="Genomic_RNA"/>
</dbReference>
<dbReference type="SMR" id="P69293"/>
<dbReference type="GO" id="GO:0019029">
    <property type="term" value="C:helical viral capsid"/>
    <property type="evidence" value="ECO:0007669"/>
    <property type="project" value="UniProtKB-UniRule"/>
</dbReference>
<dbReference type="GO" id="GO:0043657">
    <property type="term" value="C:host cell"/>
    <property type="evidence" value="ECO:0007669"/>
    <property type="project" value="GOC"/>
</dbReference>
<dbReference type="GO" id="GO:0042025">
    <property type="term" value="C:host cell nucleus"/>
    <property type="evidence" value="ECO:0007669"/>
    <property type="project" value="UniProtKB-SubCell"/>
</dbReference>
<dbReference type="GO" id="GO:1990904">
    <property type="term" value="C:ribonucleoprotein complex"/>
    <property type="evidence" value="ECO:0007669"/>
    <property type="project" value="UniProtKB-KW"/>
</dbReference>
<dbReference type="GO" id="GO:0019013">
    <property type="term" value="C:viral nucleocapsid"/>
    <property type="evidence" value="ECO:0007669"/>
    <property type="project" value="UniProtKB-UniRule"/>
</dbReference>
<dbReference type="GO" id="GO:0003723">
    <property type="term" value="F:RNA binding"/>
    <property type="evidence" value="ECO:0007669"/>
    <property type="project" value="UniProtKB-UniRule"/>
</dbReference>
<dbReference type="GO" id="GO:0005198">
    <property type="term" value="F:structural molecule activity"/>
    <property type="evidence" value="ECO:0007669"/>
    <property type="project" value="UniProtKB-UniRule"/>
</dbReference>
<dbReference type="GO" id="GO:0046718">
    <property type="term" value="P:symbiont entry into host cell"/>
    <property type="evidence" value="ECO:0007669"/>
    <property type="project" value="UniProtKB-KW"/>
</dbReference>
<dbReference type="GO" id="GO:0075732">
    <property type="term" value="P:viral penetration into host nucleus"/>
    <property type="evidence" value="ECO:0007669"/>
    <property type="project" value="UniProtKB-UniRule"/>
</dbReference>
<dbReference type="HAMAP" id="MF_04070">
    <property type="entry name" value="INFV_NCAP"/>
    <property type="match status" value="1"/>
</dbReference>
<dbReference type="InterPro" id="IPR002141">
    <property type="entry name" value="Flu_NP"/>
</dbReference>
<dbReference type="Pfam" id="PF00506">
    <property type="entry name" value="Flu_NP"/>
    <property type="match status" value="1"/>
</dbReference>
<dbReference type="SUPFAM" id="SSF161003">
    <property type="entry name" value="flu NP-like"/>
    <property type="match status" value="1"/>
</dbReference>
<proteinExistence type="inferred from homology"/>
<sequence>MASQGTKRSYEQMETDGERQNATEIRASVGKMIDGIGRFYIQMCTELKLSDYEGRLIQNSLTVERMVLSAFDERRNRYLEEHPSAGKDPKKTGGPIYKRVGGRWMRELVLYDKEEIRRIWRQANNGDDATRGLTHMMIWHSNLNDTTYQRTRALVRTGMDPRMCSLMQGSTLPRRSGAAGAAVKGIGTMVMELIRMIKRGINDRNFWRGENGRKTRSAYERMCNILKGKFQTAAQRAMMDQVRESRNPGNAEIEDLIFSARSALILRGSVAHKSCLPACVYGPAVSSGYDFEKEGYSLVGIDPFKLLQNSQVYSLIRPNENPAHKSQLVWMACHSAAFEDLRLLSFIRGTKVSPRGKLSTRGVQIASNENMDNMESSTLELRSRYWAIRTRSGGNTNQQRASAGQISVQPTFSVQRNLPFEKSTVMAAFTGNTEGRTSDMRAEIIRMMEGAKPEEVSFRGRGVFELSDEKATNPIVPSFDMSNEGSYFFGDNAEEYDN</sequence>
<reference key="1">
    <citation type="journal article" date="1993" name="J. Virol.">
        <title>Analysis of the evolution and variation of the human influenza A virus nucleoprotein gene from 1933 to 1990.</title>
        <authorList>
            <person name="Shu L.L."/>
            <person name="Bean W.J."/>
            <person name="Webster R.G."/>
        </authorList>
    </citation>
    <scope>NUCLEOTIDE SEQUENCE [GENOMIC RNA]</scope>
</reference>
<evidence type="ECO:0000255" key="1">
    <source>
        <dbReference type="HAMAP-Rule" id="MF_04070"/>
    </source>
</evidence>
<evidence type="ECO:0000256" key="2">
    <source>
        <dbReference type="SAM" id="MobiDB-lite"/>
    </source>
</evidence>
<organism>
    <name type="scientific">Influenza A virus (strain A/Guangdong/9/1987 H3N2)</name>
    <dbReference type="NCBI Taxonomy" id="383592"/>
    <lineage>
        <taxon>Viruses</taxon>
        <taxon>Riboviria</taxon>
        <taxon>Orthornavirae</taxon>
        <taxon>Negarnaviricota</taxon>
        <taxon>Polyploviricotina</taxon>
        <taxon>Insthoviricetes</taxon>
        <taxon>Articulavirales</taxon>
        <taxon>Orthomyxoviridae</taxon>
        <taxon>Alphainfluenzavirus</taxon>
        <taxon>Alphainfluenzavirus influenzae</taxon>
        <taxon>Influenza A virus</taxon>
    </lineage>
</organism>
<organismHost>
    <name type="scientific">Aves</name>
    <dbReference type="NCBI Taxonomy" id="8782"/>
</organismHost>
<organismHost>
    <name type="scientific">Homo sapiens</name>
    <name type="common">Human</name>
    <dbReference type="NCBI Taxonomy" id="9606"/>
</organismHost>
<organismHost>
    <name type="scientific">Mysticeti</name>
    <name type="common">baleen whales</name>
    <dbReference type="NCBI Taxonomy" id="9761"/>
</organismHost>
<organismHost>
    <name type="scientific">Phocidae</name>
    <name type="common">true seals</name>
    <dbReference type="NCBI Taxonomy" id="9709"/>
</organismHost>
<organismHost>
    <name type="scientific">Sus scrofa</name>
    <name type="common">Pig</name>
    <dbReference type="NCBI Taxonomy" id="9823"/>
</organismHost>
<keyword id="KW-0167">Capsid protein</keyword>
<keyword id="KW-1139">Helical capsid protein</keyword>
<keyword id="KW-1048">Host nucleus</keyword>
<keyword id="KW-0945">Host-virus interaction</keyword>
<keyword id="KW-0687">Ribonucleoprotein</keyword>
<keyword id="KW-0694">RNA-binding</keyword>
<keyword id="KW-0543">Viral nucleoprotein</keyword>
<keyword id="KW-1163">Viral penetration into host nucleus</keyword>
<keyword id="KW-0946">Virion</keyword>
<keyword id="KW-1160">Virus entry into host cell</keyword>